<protein>
    <recommendedName>
        <fullName>NAD-specific glutamate dehydrogenase</fullName>
        <shortName>NAD-GDH</shortName>
        <ecNumber>1.4.1.2</ecNumber>
    </recommendedName>
    <alternativeName>
        <fullName>Surface-associated protein PGAG1</fullName>
    </alternativeName>
</protein>
<keyword id="KW-0520">NAD</keyword>
<keyword id="KW-0560">Oxidoreductase</keyword>
<gene>
    <name type="primary">gdh</name>
    <name type="ordered locus">PGN_1367</name>
</gene>
<comment type="function">
    <text>Probably involved in degradation rather than biosynthesis of glutamate.</text>
</comment>
<comment type="catalytic activity">
    <reaction>
        <text>L-glutamate + NAD(+) + H2O = 2-oxoglutarate + NH4(+) + NADH + H(+)</text>
        <dbReference type="Rhea" id="RHEA:15133"/>
        <dbReference type="ChEBI" id="CHEBI:15377"/>
        <dbReference type="ChEBI" id="CHEBI:15378"/>
        <dbReference type="ChEBI" id="CHEBI:16810"/>
        <dbReference type="ChEBI" id="CHEBI:28938"/>
        <dbReference type="ChEBI" id="CHEBI:29985"/>
        <dbReference type="ChEBI" id="CHEBI:57540"/>
        <dbReference type="ChEBI" id="CHEBI:57945"/>
        <dbReference type="EC" id="1.4.1.2"/>
    </reaction>
</comment>
<comment type="subunit">
    <text evidence="2">Homohexamer.</text>
</comment>
<comment type="subcellular location">
    <subcellularLocation>
        <location>Cell surface</location>
    </subcellularLocation>
</comment>
<comment type="similarity">
    <text evidence="2">Belongs to the Glu/Leu/Phe/Val dehydrogenases family.</text>
</comment>
<sequence>MKTQEIMTMLEAKHPGESEFLQAVKEVLLSVEEVYNQHPEFEKNGIIERIVEPDRVFTFRVPWVDDQGKVQVNIGYRVQFNNAIGPYKGGIRFHPSVNLSILKFLGFEQMFKNALTTLPMGGGKGGADFSPKGKSEAEIMRFCQSFMTELWRNIGPDTDIPAGDIGVGGREVGYMFGMYKKLAREHTGTLTGKGFEFGGSRLRPESTGFGAVYFVQNMCKQNGVDYKGKTLAISGFGNVAWGVAQKATELGIKVVTISGPDGYVYDPDGINTPEKFRCMLDLRDSGNDVVSDYVKRFPNAQFFPGKKPWEQKVDFAMPCATQNEMNLEDAKTLHKNGVTLVAETSNMGCTAEASEYYVANKMLFAPGKAVNAGGVSCSGLEMTQNAMHLVWTNEEVDKWLHQIMQDIHEQCVTYGKDGNYIDYVKGANIAGFMKVAKAMVAQGVC</sequence>
<feature type="chain" id="PRO_0000370692" description="NAD-specific glutamate dehydrogenase">
    <location>
        <begin position="1"/>
        <end position="445"/>
    </location>
</feature>
<feature type="active site" evidence="1">
    <location>
        <position position="124"/>
    </location>
</feature>
<feature type="sequence conflict" description="In Ref. 1; AAA50985." evidence="2" ref="1">
    <original>S</original>
    <variation>Y</variation>
    <location>
        <position position="258"/>
    </location>
</feature>
<reference key="1">
    <citation type="journal article" date="1994" name="Infect. Immun.">
        <title>Nucleotide sequence of a Porphyromonas gingivalis gene encoding a surface-associated glutamate dehydrogenase and construction of a glutamate dehydrogenase-deficient isogenic mutant.</title>
        <authorList>
            <person name="Joe A."/>
            <person name="Murray C.S."/>
            <person name="McBride B.C."/>
        </authorList>
    </citation>
    <scope>NUCLEOTIDE SEQUENCE [GENOMIC DNA]</scope>
</reference>
<reference key="2">
    <citation type="journal article" date="2008" name="DNA Res.">
        <title>Determination of the genome sequence of Porphyromonas gingivalis strain ATCC 33277 and genomic comparison with strain W83 revealed extensive genome rearrangements in P. gingivalis.</title>
        <authorList>
            <person name="Naito M."/>
            <person name="Hirakawa H."/>
            <person name="Yamashita A."/>
            <person name="Ohara N."/>
            <person name="Shoji M."/>
            <person name="Yukitake H."/>
            <person name="Nakayama K."/>
            <person name="Toh H."/>
            <person name="Yoshimura F."/>
            <person name="Kuhara S."/>
            <person name="Hattori M."/>
            <person name="Hayashi T."/>
            <person name="Nakayama K."/>
        </authorList>
    </citation>
    <scope>NUCLEOTIDE SEQUENCE [LARGE SCALE GENOMIC DNA]</scope>
    <source>
        <strain>ATCC 33277 / DSM 20709 / CIP 103683 / JCM 12257 / NCTC 11834 / 2561</strain>
    </source>
</reference>
<proteinExistence type="inferred from homology"/>
<evidence type="ECO:0000255" key="1">
    <source>
        <dbReference type="PROSITE-ProRule" id="PRU10011"/>
    </source>
</evidence>
<evidence type="ECO:0000305" key="2"/>
<name>DHE2_PORG3</name>
<organism>
    <name type="scientific">Porphyromonas gingivalis (strain ATCC 33277 / DSM 20709 / CIP 103683 / JCM 12257 / NCTC 11834 / 2561)</name>
    <dbReference type="NCBI Taxonomy" id="431947"/>
    <lineage>
        <taxon>Bacteria</taxon>
        <taxon>Pseudomonadati</taxon>
        <taxon>Bacteroidota</taxon>
        <taxon>Bacteroidia</taxon>
        <taxon>Bacteroidales</taxon>
        <taxon>Porphyromonadaceae</taxon>
        <taxon>Porphyromonas</taxon>
    </lineage>
</organism>
<dbReference type="EC" id="1.4.1.2"/>
<dbReference type="EMBL" id="L07290">
    <property type="protein sequence ID" value="AAA50985.1"/>
    <property type="molecule type" value="Genomic_DNA"/>
</dbReference>
<dbReference type="EMBL" id="AP009380">
    <property type="protein sequence ID" value="BAG33886.1"/>
    <property type="molecule type" value="Genomic_DNA"/>
</dbReference>
<dbReference type="SMR" id="B2RKJ1"/>
<dbReference type="GeneID" id="29256557"/>
<dbReference type="KEGG" id="pgn:PGN_1367"/>
<dbReference type="eggNOG" id="COG0334">
    <property type="taxonomic scope" value="Bacteria"/>
</dbReference>
<dbReference type="HOGENOM" id="CLU_025763_2_1_10"/>
<dbReference type="OrthoDB" id="9803297at2"/>
<dbReference type="BioCyc" id="PGIN431947:G1G2V-1553-MONOMER"/>
<dbReference type="Proteomes" id="UP000008842">
    <property type="component" value="Chromosome"/>
</dbReference>
<dbReference type="GO" id="GO:0009986">
    <property type="term" value="C:cell surface"/>
    <property type="evidence" value="ECO:0007669"/>
    <property type="project" value="UniProtKB-SubCell"/>
</dbReference>
<dbReference type="GO" id="GO:0005829">
    <property type="term" value="C:cytosol"/>
    <property type="evidence" value="ECO:0007669"/>
    <property type="project" value="TreeGrafter"/>
</dbReference>
<dbReference type="GO" id="GO:0004352">
    <property type="term" value="F:glutamate dehydrogenase (NAD+) activity"/>
    <property type="evidence" value="ECO:0007669"/>
    <property type="project" value="UniProtKB-EC"/>
</dbReference>
<dbReference type="GO" id="GO:0004354">
    <property type="term" value="F:glutamate dehydrogenase (NADP+) activity"/>
    <property type="evidence" value="ECO:0007669"/>
    <property type="project" value="TreeGrafter"/>
</dbReference>
<dbReference type="GO" id="GO:0006537">
    <property type="term" value="P:glutamate biosynthetic process"/>
    <property type="evidence" value="ECO:0007669"/>
    <property type="project" value="TreeGrafter"/>
</dbReference>
<dbReference type="CDD" id="cd05313">
    <property type="entry name" value="NAD_bind_2_Glu_DH"/>
    <property type="match status" value="1"/>
</dbReference>
<dbReference type="FunFam" id="1.10.285.10:FF:000001">
    <property type="entry name" value="Glutamate dehydrogenase"/>
    <property type="match status" value="1"/>
</dbReference>
<dbReference type="FunFam" id="3.40.50.10860:FF:000002">
    <property type="entry name" value="Glutamate dehydrogenase"/>
    <property type="match status" value="1"/>
</dbReference>
<dbReference type="FunFam" id="3.40.50.720:FF:000030">
    <property type="entry name" value="Glutamate dehydrogenase"/>
    <property type="match status" value="1"/>
</dbReference>
<dbReference type="Gene3D" id="1.10.285.10">
    <property type="entry name" value="Glutamate Dehydrogenase, chain A, domain 3"/>
    <property type="match status" value="2"/>
</dbReference>
<dbReference type="Gene3D" id="3.40.50.10860">
    <property type="entry name" value="Leucine Dehydrogenase, chain A, domain 1"/>
    <property type="match status" value="1"/>
</dbReference>
<dbReference type="Gene3D" id="3.40.50.720">
    <property type="entry name" value="NAD(P)-binding Rossmann-like Domain"/>
    <property type="match status" value="1"/>
</dbReference>
<dbReference type="InterPro" id="IPR046346">
    <property type="entry name" value="Aminoacid_DH-like_N_sf"/>
</dbReference>
<dbReference type="InterPro" id="IPR006095">
    <property type="entry name" value="Glu/Leu/Phe/Val/Trp_DH"/>
</dbReference>
<dbReference type="InterPro" id="IPR006096">
    <property type="entry name" value="Glu/Leu/Phe/Val/Trp_DH_C"/>
</dbReference>
<dbReference type="InterPro" id="IPR006097">
    <property type="entry name" value="Glu/Leu/Phe/Val/Trp_DH_dimer"/>
</dbReference>
<dbReference type="InterPro" id="IPR033524">
    <property type="entry name" value="Glu/Leu/Phe/Val_DH_AS"/>
</dbReference>
<dbReference type="InterPro" id="IPR014362">
    <property type="entry name" value="Glu_DH"/>
</dbReference>
<dbReference type="InterPro" id="IPR050724">
    <property type="entry name" value="Glu_Leu_Phe_Val_DH"/>
</dbReference>
<dbReference type="InterPro" id="IPR036291">
    <property type="entry name" value="NAD(P)-bd_dom_sf"/>
</dbReference>
<dbReference type="InterPro" id="IPR033922">
    <property type="entry name" value="NAD_bind_Glu_DH"/>
</dbReference>
<dbReference type="NCBIfam" id="NF006929">
    <property type="entry name" value="PRK09414.1"/>
    <property type="match status" value="1"/>
</dbReference>
<dbReference type="NCBIfam" id="NF010633">
    <property type="entry name" value="PRK14030.1"/>
    <property type="match status" value="1"/>
</dbReference>
<dbReference type="PANTHER" id="PTHR43571">
    <property type="entry name" value="NADP-SPECIFIC GLUTAMATE DEHYDROGENASE 1-RELATED"/>
    <property type="match status" value="1"/>
</dbReference>
<dbReference type="PANTHER" id="PTHR43571:SF1">
    <property type="entry name" value="NADP-SPECIFIC GLUTAMATE DEHYDROGENASE 1-RELATED"/>
    <property type="match status" value="1"/>
</dbReference>
<dbReference type="Pfam" id="PF00208">
    <property type="entry name" value="ELFV_dehydrog"/>
    <property type="match status" value="1"/>
</dbReference>
<dbReference type="Pfam" id="PF02812">
    <property type="entry name" value="ELFV_dehydrog_N"/>
    <property type="match status" value="1"/>
</dbReference>
<dbReference type="PIRSF" id="PIRSF000185">
    <property type="entry name" value="Glu_DH"/>
    <property type="match status" value="1"/>
</dbReference>
<dbReference type="PRINTS" id="PR00082">
    <property type="entry name" value="GLFDHDRGNASE"/>
</dbReference>
<dbReference type="SMART" id="SM00839">
    <property type="entry name" value="ELFV_dehydrog"/>
    <property type="match status" value="1"/>
</dbReference>
<dbReference type="SUPFAM" id="SSF53223">
    <property type="entry name" value="Aminoacid dehydrogenase-like, N-terminal domain"/>
    <property type="match status" value="1"/>
</dbReference>
<dbReference type="SUPFAM" id="SSF51735">
    <property type="entry name" value="NAD(P)-binding Rossmann-fold domains"/>
    <property type="match status" value="1"/>
</dbReference>
<dbReference type="PROSITE" id="PS00074">
    <property type="entry name" value="GLFV_DEHYDROGENASE"/>
    <property type="match status" value="1"/>
</dbReference>
<accession>B2RKJ1</accession>
<accession>Q03578</accession>